<sequence length="406" mass="45887">MTFLQRLQGLADNKICAFAWFVVRRFDEERVPQAAASMTFTTLLALVPVLTVMVAVASIFPVFDRWSDSFVSFVNQTIVPQGADMVFDYINAFREQANRLTAIGSVMLVVTSLMLIRTIDNTFNRIWRVNSQRPWMMQFLVYWALLTFGPLSLGVGISFMVGSVQDAALASGAPQWSGALRTAATLTFMTLLLWGLYRFVPNRFVPARQAFVGALATAFCLETARSLFTWYMGNFDGYRSIYGAFAAVPFFLLWLNLLWTLVLGGAVLTSSLSYWQGEAFRRGFDSRGRFDDVLKILLLLDAAQKEGKALPVQEFRRHINMGYDELGELLEKLARHGYIYSGRQGWVLKTGADSIELNELFKLFVYRPLPVERDHVNQAVDAVMTPCLQTLNMTLAEFDAQAKKRQ</sequence>
<comment type="subcellular location">
    <subcellularLocation>
        <location evidence="1">Cell inner membrane</location>
        <topology evidence="1">Multi-pass membrane protein</topology>
    </subcellularLocation>
</comment>
<comment type="similarity">
    <text evidence="1">Belongs to the UPF0761 family.</text>
</comment>
<proteinExistence type="inferred from homology"/>
<organism>
    <name type="scientific">Neisseria meningitidis serogroup B (strain ATCC BAA-335 / MC58)</name>
    <dbReference type="NCBI Taxonomy" id="122586"/>
    <lineage>
        <taxon>Bacteria</taxon>
        <taxon>Pseudomonadati</taxon>
        <taxon>Pseudomonadota</taxon>
        <taxon>Betaproteobacteria</taxon>
        <taxon>Neisseriales</taxon>
        <taxon>Neisseriaceae</taxon>
        <taxon>Neisseria</taxon>
    </lineage>
</organism>
<keyword id="KW-0997">Cell inner membrane</keyword>
<keyword id="KW-1003">Cell membrane</keyword>
<keyword id="KW-0472">Membrane</keyword>
<keyword id="KW-1185">Reference proteome</keyword>
<keyword id="KW-0812">Transmembrane</keyword>
<keyword id="KW-1133">Transmembrane helix</keyword>
<accession>Q9K0R0</accession>
<name>Y524_NEIMB</name>
<gene>
    <name type="ordered locus">NMB0524</name>
</gene>
<dbReference type="EMBL" id="AE002098">
    <property type="protein sequence ID" value="AAF40954.1"/>
    <property type="molecule type" value="Genomic_DNA"/>
</dbReference>
<dbReference type="PIR" id="D81189">
    <property type="entry name" value="D81189"/>
</dbReference>
<dbReference type="RefSeq" id="NP_273569.1">
    <property type="nucleotide sequence ID" value="NC_003112.2"/>
</dbReference>
<dbReference type="RefSeq" id="WP_002237729.1">
    <property type="nucleotide sequence ID" value="NC_003112.2"/>
</dbReference>
<dbReference type="SMR" id="Q9K0R0"/>
<dbReference type="FunCoup" id="Q9K0R0">
    <property type="interactions" value="108"/>
</dbReference>
<dbReference type="STRING" id="122586.NMB0524"/>
<dbReference type="PaxDb" id="122586-NMB0524"/>
<dbReference type="DNASU" id="902639"/>
<dbReference type="KEGG" id="nme:NMB0524"/>
<dbReference type="PATRIC" id="fig|122586.8.peg.665"/>
<dbReference type="HOGENOM" id="CLU_032288_1_0_4"/>
<dbReference type="InParanoid" id="Q9K0R0"/>
<dbReference type="OrthoDB" id="9808671at2"/>
<dbReference type="Proteomes" id="UP000000425">
    <property type="component" value="Chromosome"/>
</dbReference>
<dbReference type="GO" id="GO:0005886">
    <property type="term" value="C:plasma membrane"/>
    <property type="evidence" value="ECO:0000318"/>
    <property type="project" value="GO_Central"/>
</dbReference>
<dbReference type="HAMAP" id="MF_00672">
    <property type="entry name" value="UPF0761"/>
    <property type="match status" value="1"/>
</dbReference>
<dbReference type="InterPro" id="IPR023679">
    <property type="entry name" value="UPF0761_bac"/>
</dbReference>
<dbReference type="InterPro" id="IPR017039">
    <property type="entry name" value="Virul_fac_BrkB"/>
</dbReference>
<dbReference type="NCBIfam" id="NF003256">
    <property type="entry name" value="PRK04214.1"/>
    <property type="match status" value="1"/>
</dbReference>
<dbReference type="NCBIfam" id="TIGR00765">
    <property type="entry name" value="yihY_not_rbn"/>
    <property type="match status" value="1"/>
</dbReference>
<dbReference type="PANTHER" id="PTHR30213">
    <property type="entry name" value="INNER MEMBRANE PROTEIN YHJD"/>
    <property type="match status" value="1"/>
</dbReference>
<dbReference type="PANTHER" id="PTHR30213:SF0">
    <property type="entry name" value="UPF0761 MEMBRANE PROTEIN YIHY"/>
    <property type="match status" value="1"/>
</dbReference>
<dbReference type="Pfam" id="PF03631">
    <property type="entry name" value="Virul_fac_BrkB"/>
    <property type="match status" value="1"/>
</dbReference>
<protein>
    <recommendedName>
        <fullName evidence="1">UPF0761 membrane protein NMB0524</fullName>
    </recommendedName>
</protein>
<feature type="chain" id="PRO_0000200989" description="UPF0761 membrane protein NMB0524">
    <location>
        <begin position="1"/>
        <end position="406"/>
    </location>
</feature>
<feature type="transmembrane region" description="Helical" evidence="1">
    <location>
        <begin position="43"/>
        <end position="63"/>
    </location>
</feature>
<feature type="transmembrane region" description="Helical" evidence="1">
    <location>
        <begin position="100"/>
        <end position="120"/>
    </location>
</feature>
<feature type="transmembrane region" description="Helical" evidence="1">
    <location>
        <begin position="139"/>
        <end position="159"/>
    </location>
</feature>
<feature type="transmembrane region" description="Helical" evidence="1">
    <location>
        <begin position="176"/>
        <end position="196"/>
    </location>
</feature>
<feature type="transmembrane region" description="Helical" evidence="1">
    <location>
        <begin position="210"/>
        <end position="230"/>
    </location>
</feature>
<feature type="transmembrane region" description="Helical" evidence="1">
    <location>
        <begin position="248"/>
        <end position="268"/>
    </location>
</feature>
<evidence type="ECO:0000255" key="1">
    <source>
        <dbReference type="HAMAP-Rule" id="MF_00672"/>
    </source>
</evidence>
<reference key="1">
    <citation type="journal article" date="2000" name="Science">
        <title>Complete genome sequence of Neisseria meningitidis serogroup B strain MC58.</title>
        <authorList>
            <person name="Tettelin H."/>
            <person name="Saunders N.J."/>
            <person name="Heidelberg J.F."/>
            <person name="Jeffries A.C."/>
            <person name="Nelson K.E."/>
            <person name="Eisen J.A."/>
            <person name="Ketchum K.A."/>
            <person name="Hood D.W."/>
            <person name="Peden J.F."/>
            <person name="Dodson R.J."/>
            <person name="Nelson W.C."/>
            <person name="Gwinn M.L."/>
            <person name="DeBoy R.T."/>
            <person name="Peterson J.D."/>
            <person name="Hickey E.K."/>
            <person name="Haft D.H."/>
            <person name="Salzberg S.L."/>
            <person name="White O."/>
            <person name="Fleischmann R.D."/>
            <person name="Dougherty B.A."/>
            <person name="Mason T.M."/>
            <person name="Ciecko A."/>
            <person name="Parksey D.S."/>
            <person name="Blair E."/>
            <person name="Cittone H."/>
            <person name="Clark E.B."/>
            <person name="Cotton M.D."/>
            <person name="Utterback T.R."/>
            <person name="Khouri H.M."/>
            <person name="Qin H."/>
            <person name="Vamathevan J.J."/>
            <person name="Gill J."/>
            <person name="Scarlato V."/>
            <person name="Masignani V."/>
            <person name="Pizza M."/>
            <person name="Grandi G."/>
            <person name="Sun L."/>
            <person name="Smith H.O."/>
            <person name="Fraser C.M."/>
            <person name="Moxon E.R."/>
            <person name="Rappuoli R."/>
            <person name="Venter J.C."/>
        </authorList>
    </citation>
    <scope>NUCLEOTIDE SEQUENCE [LARGE SCALE GENOMIC DNA]</scope>
    <source>
        <strain>ATCC BAA-335 / MC58</strain>
    </source>
</reference>